<reference key="1">
    <citation type="journal article" date="1997" name="Nature">
        <title>The complete genome sequence of the Gram-positive bacterium Bacillus subtilis.</title>
        <authorList>
            <person name="Kunst F."/>
            <person name="Ogasawara N."/>
            <person name="Moszer I."/>
            <person name="Albertini A.M."/>
            <person name="Alloni G."/>
            <person name="Azevedo V."/>
            <person name="Bertero M.G."/>
            <person name="Bessieres P."/>
            <person name="Bolotin A."/>
            <person name="Borchert S."/>
            <person name="Borriss R."/>
            <person name="Boursier L."/>
            <person name="Brans A."/>
            <person name="Braun M."/>
            <person name="Brignell S.C."/>
            <person name="Bron S."/>
            <person name="Brouillet S."/>
            <person name="Bruschi C.V."/>
            <person name="Caldwell B."/>
            <person name="Capuano V."/>
            <person name="Carter N.M."/>
            <person name="Choi S.-K."/>
            <person name="Codani J.-J."/>
            <person name="Connerton I.F."/>
            <person name="Cummings N.J."/>
            <person name="Daniel R.A."/>
            <person name="Denizot F."/>
            <person name="Devine K.M."/>
            <person name="Duesterhoeft A."/>
            <person name="Ehrlich S.D."/>
            <person name="Emmerson P.T."/>
            <person name="Entian K.-D."/>
            <person name="Errington J."/>
            <person name="Fabret C."/>
            <person name="Ferrari E."/>
            <person name="Foulger D."/>
            <person name="Fritz C."/>
            <person name="Fujita M."/>
            <person name="Fujita Y."/>
            <person name="Fuma S."/>
            <person name="Galizzi A."/>
            <person name="Galleron N."/>
            <person name="Ghim S.-Y."/>
            <person name="Glaser P."/>
            <person name="Goffeau A."/>
            <person name="Golightly E.J."/>
            <person name="Grandi G."/>
            <person name="Guiseppi G."/>
            <person name="Guy B.J."/>
            <person name="Haga K."/>
            <person name="Haiech J."/>
            <person name="Harwood C.R."/>
            <person name="Henaut A."/>
            <person name="Hilbert H."/>
            <person name="Holsappel S."/>
            <person name="Hosono S."/>
            <person name="Hullo M.-F."/>
            <person name="Itaya M."/>
            <person name="Jones L.-M."/>
            <person name="Joris B."/>
            <person name="Karamata D."/>
            <person name="Kasahara Y."/>
            <person name="Klaerr-Blanchard M."/>
            <person name="Klein C."/>
            <person name="Kobayashi Y."/>
            <person name="Koetter P."/>
            <person name="Koningstein G."/>
            <person name="Krogh S."/>
            <person name="Kumano M."/>
            <person name="Kurita K."/>
            <person name="Lapidus A."/>
            <person name="Lardinois S."/>
            <person name="Lauber J."/>
            <person name="Lazarevic V."/>
            <person name="Lee S.-M."/>
            <person name="Levine A."/>
            <person name="Liu H."/>
            <person name="Masuda S."/>
            <person name="Mauel C."/>
            <person name="Medigue C."/>
            <person name="Medina N."/>
            <person name="Mellado R.P."/>
            <person name="Mizuno M."/>
            <person name="Moestl D."/>
            <person name="Nakai S."/>
            <person name="Noback M."/>
            <person name="Noone D."/>
            <person name="O'Reilly M."/>
            <person name="Ogawa K."/>
            <person name="Ogiwara A."/>
            <person name="Oudega B."/>
            <person name="Park S.-H."/>
            <person name="Parro V."/>
            <person name="Pohl T.M."/>
            <person name="Portetelle D."/>
            <person name="Porwollik S."/>
            <person name="Prescott A.M."/>
            <person name="Presecan E."/>
            <person name="Pujic P."/>
            <person name="Purnelle B."/>
            <person name="Rapoport G."/>
            <person name="Rey M."/>
            <person name="Reynolds S."/>
            <person name="Rieger M."/>
            <person name="Rivolta C."/>
            <person name="Rocha E."/>
            <person name="Roche B."/>
            <person name="Rose M."/>
            <person name="Sadaie Y."/>
            <person name="Sato T."/>
            <person name="Scanlan E."/>
            <person name="Schleich S."/>
            <person name="Schroeter R."/>
            <person name="Scoffone F."/>
            <person name="Sekiguchi J."/>
            <person name="Sekowska A."/>
            <person name="Seror S.J."/>
            <person name="Serror P."/>
            <person name="Shin B.-S."/>
            <person name="Soldo B."/>
            <person name="Sorokin A."/>
            <person name="Tacconi E."/>
            <person name="Takagi T."/>
            <person name="Takahashi H."/>
            <person name="Takemaru K."/>
            <person name="Takeuchi M."/>
            <person name="Tamakoshi A."/>
            <person name="Tanaka T."/>
            <person name="Terpstra P."/>
            <person name="Tognoni A."/>
            <person name="Tosato V."/>
            <person name="Uchiyama S."/>
            <person name="Vandenbol M."/>
            <person name="Vannier F."/>
            <person name="Vassarotti A."/>
            <person name="Viari A."/>
            <person name="Wambutt R."/>
            <person name="Wedler E."/>
            <person name="Wedler H."/>
            <person name="Weitzenegger T."/>
            <person name="Winters P."/>
            <person name="Wipat A."/>
            <person name="Yamamoto H."/>
            <person name="Yamane K."/>
            <person name="Yasumoto K."/>
            <person name="Yata K."/>
            <person name="Yoshida K."/>
            <person name="Yoshikawa H.-F."/>
            <person name="Zumstein E."/>
            <person name="Yoshikawa H."/>
            <person name="Danchin A."/>
        </authorList>
    </citation>
    <scope>NUCLEOTIDE SEQUENCE [LARGE SCALE GENOMIC DNA]</scope>
    <source>
        <strain>168</strain>
    </source>
</reference>
<reference key="2">
    <citation type="journal article" date="2009" name="Microbiology">
        <title>From a consortium sequence to a unified sequence: the Bacillus subtilis 168 reference genome a decade later.</title>
        <authorList>
            <person name="Barbe V."/>
            <person name="Cruveiller S."/>
            <person name="Kunst F."/>
            <person name="Lenoble P."/>
            <person name="Meurice G."/>
            <person name="Sekowska A."/>
            <person name="Vallenet D."/>
            <person name="Wang T."/>
            <person name="Moszer I."/>
            <person name="Medigue C."/>
            <person name="Danchin A."/>
        </authorList>
    </citation>
    <scope>IDENTIFICATION</scope>
</reference>
<proteinExistence type="predicted"/>
<feature type="chain" id="PRO_0000389491" description="Putative integral membrane protein YxzK">
    <location>
        <begin position="1"/>
        <end position="134"/>
    </location>
</feature>
<feature type="transmembrane region" description="Helical" evidence="1">
    <location>
        <begin position="3"/>
        <end position="23"/>
    </location>
</feature>
<feature type="transmembrane region" description="Helical" evidence="1">
    <location>
        <begin position="35"/>
        <end position="55"/>
    </location>
</feature>
<feature type="transmembrane region" description="Helical" evidence="1">
    <location>
        <begin position="58"/>
        <end position="78"/>
    </location>
</feature>
<feature type="transmembrane region" description="Helical" evidence="1">
    <location>
        <begin position="89"/>
        <end position="109"/>
    </location>
</feature>
<gene>
    <name type="primary">yxzK</name>
    <name type="ordered locus">BSU40021</name>
</gene>
<comment type="subcellular location">
    <subcellularLocation>
        <location evidence="2">Cell membrane</location>
        <topology evidence="2">Multi-pass membrane protein</topology>
    </subcellularLocation>
</comment>
<evidence type="ECO:0000255" key="1"/>
<evidence type="ECO:0000305" key="2"/>
<sequence>MKVIRIILQVLILYVFFMIGEAIQHLFHLPVSGSIVGLVLLLICLGLRIVPVSIIEDGAGFLLSFLPLLFIPAMTGVINYPSLISFNGLMLLITVVLSTIVTIIAAGFASQLLEKKAKKREEKEKCSKHVSRSL</sequence>
<protein>
    <recommendedName>
        <fullName>Putative integral membrane protein YxzK</fullName>
    </recommendedName>
</protein>
<organism>
    <name type="scientific">Bacillus subtilis (strain 168)</name>
    <dbReference type="NCBI Taxonomy" id="224308"/>
    <lineage>
        <taxon>Bacteria</taxon>
        <taxon>Bacillati</taxon>
        <taxon>Bacillota</taxon>
        <taxon>Bacilli</taxon>
        <taxon>Bacillales</taxon>
        <taxon>Bacillaceae</taxon>
        <taxon>Bacillus</taxon>
    </lineage>
</organism>
<name>YXZK_BACSU</name>
<keyword id="KW-1003">Cell membrane</keyword>
<keyword id="KW-0472">Membrane</keyword>
<keyword id="KW-1185">Reference proteome</keyword>
<keyword id="KW-0812">Transmembrane</keyword>
<keyword id="KW-1133">Transmembrane helix</keyword>
<dbReference type="EMBL" id="AL009126">
    <property type="protein sequence ID" value="CAX52713.1"/>
    <property type="molecule type" value="Genomic_DNA"/>
</dbReference>
<dbReference type="RefSeq" id="WP_009968420.1">
    <property type="nucleotide sequence ID" value="NZ_OZ025638.1"/>
</dbReference>
<dbReference type="RefSeq" id="YP_003097798.1">
    <property type="nucleotide sequence ID" value="NC_000964.3"/>
</dbReference>
<dbReference type="SMR" id="C0H3T7"/>
<dbReference type="FunCoup" id="C0H3T7">
    <property type="interactions" value="33"/>
</dbReference>
<dbReference type="STRING" id="224308.BSU40021"/>
<dbReference type="PaxDb" id="224308-BSU40021"/>
<dbReference type="EnsemblBacteria" id="CAX52713">
    <property type="protein sequence ID" value="CAX52713"/>
    <property type="gene ID" value="BSU_40021"/>
</dbReference>
<dbReference type="GeneID" id="8303163"/>
<dbReference type="KEGG" id="bsu:BSU40021"/>
<dbReference type="PATRIC" id="fig|224308.179.peg.4328"/>
<dbReference type="eggNOG" id="COG1380">
    <property type="taxonomic scope" value="Bacteria"/>
</dbReference>
<dbReference type="InParanoid" id="C0H3T7"/>
<dbReference type="BioCyc" id="BSUB:BSU40021-MONOMER"/>
<dbReference type="Proteomes" id="UP000001570">
    <property type="component" value="Chromosome"/>
</dbReference>
<dbReference type="GO" id="GO:0005886">
    <property type="term" value="C:plasma membrane"/>
    <property type="evidence" value="ECO:0007669"/>
    <property type="project" value="UniProtKB-SubCell"/>
</dbReference>
<dbReference type="InterPro" id="IPR005538">
    <property type="entry name" value="LrgA/CidA"/>
</dbReference>
<dbReference type="NCBIfam" id="NF002460">
    <property type="entry name" value="PRK01658.1"/>
    <property type="match status" value="1"/>
</dbReference>
<dbReference type="PANTHER" id="PTHR33931">
    <property type="entry name" value="HOLIN-LIKE PROTEIN CIDA-RELATED"/>
    <property type="match status" value="1"/>
</dbReference>
<dbReference type="PANTHER" id="PTHR33931:SF6">
    <property type="entry name" value="INTEGRAL MEMBRANE PROTEIN YXZK-RELATED"/>
    <property type="match status" value="1"/>
</dbReference>
<dbReference type="Pfam" id="PF03788">
    <property type="entry name" value="LrgA"/>
    <property type="match status" value="1"/>
</dbReference>
<accession>C0H3T7</accession>